<name>Y484_METMA</name>
<protein>
    <recommendedName>
        <fullName evidence="1">Protein MM_0484</fullName>
    </recommendedName>
</protein>
<sequence>MLTETEGRAAVKLARKTIEIFLSKGKSPRPDASGVELSPVFEEYRGVFVTLTEGGLLRGCIGHPYPDSTLKEAILDSAISAATRDPRFPTVEQDEMKNILVEVTILTQPEKINASPKELPDKVEIGKHGLIVKQGYCQGLLLPQVAPENDMDSIDFLSHTCMKAGLSPDAWVKGAEVYCFEGQIFKEKEPDGEVIEEKF</sequence>
<keyword id="KW-0002">3D-structure</keyword>
<organism>
    <name type="scientific">Methanosarcina mazei (strain ATCC BAA-159 / DSM 3647 / Goe1 / Go1 / JCM 11833 / OCM 88)</name>
    <name type="common">Methanosarcina frisia</name>
    <dbReference type="NCBI Taxonomy" id="192952"/>
    <lineage>
        <taxon>Archaea</taxon>
        <taxon>Methanobacteriati</taxon>
        <taxon>Methanobacteriota</taxon>
        <taxon>Stenosarchaea group</taxon>
        <taxon>Methanomicrobia</taxon>
        <taxon>Methanosarcinales</taxon>
        <taxon>Methanosarcinaceae</taxon>
        <taxon>Methanosarcina</taxon>
    </lineage>
</organism>
<proteinExistence type="evidence at protein level"/>
<dbReference type="EMBL" id="AE008384">
    <property type="protein sequence ID" value="AAM30180.1"/>
    <property type="molecule type" value="Genomic_DNA"/>
</dbReference>
<dbReference type="RefSeq" id="WP_011032437.1">
    <property type="nucleotide sequence ID" value="NC_003901.1"/>
</dbReference>
<dbReference type="PDB" id="1ZQ7">
    <property type="method" value="X-ray"/>
    <property type="resolution" value="2.11 A"/>
    <property type="chains" value="A/B/C/D=1-199"/>
</dbReference>
<dbReference type="PDBsum" id="1ZQ7"/>
<dbReference type="SMR" id="Q8PZK8"/>
<dbReference type="KEGG" id="mma:MM_0484"/>
<dbReference type="PATRIC" id="fig|192952.21.peg.581"/>
<dbReference type="eggNOG" id="arCOG01336">
    <property type="taxonomic scope" value="Archaea"/>
</dbReference>
<dbReference type="HOGENOM" id="CLU_095686_1_1_2"/>
<dbReference type="EvolutionaryTrace" id="Q8PZK8"/>
<dbReference type="Proteomes" id="UP000000595">
    <property type="component" value="Chromosome"/>
</dbReference>
<dbReference type="Gene3D" id="3.30.700.20">
    <property type="entry name" value="Hypothetical protein ph0010, domain 1"/>
    <property type="match status" value="1"/>
</dbReference>
<dbReference type="Gene3D" id="3.30.1490.150">
    <property type="entry name" value="Hypothetical protein ph0010, domain 2"/>
    <property type="match status" value="1"/>
</dbReference>
<dbReference type="HAMAP" id="MF_00645">
    <property type="entry name" value="AMMECR1"/>
    <property type="match status" value="1"/>
</dbReference>
<dbReference type="InterPro" id="IPR023473">
    <property type="entry name" value="AMMECR1"/>
</dbReference>
<dbReference type="InterPro" id="IPR036071">
    <property type="entry name" value="AMMECR1_dom_sf"/>
</dbReference>
<dbReference type="InterPro" id="IPR002733">
    <property type="entry name" value="AMMECR1_domain"/>
</dbReference>
<dbReference type="InterPro" id="IPR027485">
    <property type="entry name" value="AMMECR1_N"/>
</dbReference>
<dbReference type="InterPro" id="IPR027623">
    <property type="entry name" value="AmmeMemoSam_A"/>
</dbReference>
<dbReference type="InterPro" id="IPR023472">
    <property type="entry name" value="Uncharacterised_MJ0810"/>
</dbReference>
<dbReference type="NCBIfam" id="TIGR04335">
    <property type="entry name" value="AmmeMemoSam_A"/>
    <property type="match status" value="1"/>
</dbReference>
<dbReference type="NCBIfam" id="NF002000">
    <property type="entry name" value="PRK00801.1"/>
    <property type="match status" value="1"/>
</dbReference>
<dbReference type="NCBIfam" id="TIGR00296">
    <property type="entry name" value="TIGR00296 family protein"/>
    <property type="match status" value="1"/>
</dbReference>
<dbReference type="PANTHER" id="PTHR13016:SF0">
    <property type="entry name" value="AMME SYNDROME CANDIDATE GENE 1 PROTEIN"/>
    <property type="match status" value="1"/>
</dbReference>
<dbReference type="PANTHER" id="PTHR13016">
    <property type="entry name" value="AMMECR1 HOMOLOG"/>
    <property type="match status" value="1"/>
</dbReference>
<dbReference type="Pfam" id="PF01871">
    <property type="entry name" value="AMMECR1"/>
    <property type="match status" value="1"/>
</dbReference>
<dbReference type="SUPFAM" id="SSF143447">
    <property type="entry name" value="AMMECR1-like"/>
    <property type="match status" value="1"/>
</dbReference>
<dbReference type="PROSITE" id="PS51112">
    <property type="entry name" value="AMMECR1"/>
    <property type="match status" value="1"/>
</dbReference>
<feature type="chain" id="PRO_0000142379" description="Protein MM_0484">
    <location>
        <begin position="1"/>
        <end position="199"/>
    </location>
</feature>
<feature type="domain" description="AMMECR1" evidence="1">
    <location>
        <begin position="5"/>
        <end position="196"/>
    </location>
</feature>
<feature type="helix" evidence="2">
    <location>
        <begin position="4"/>
        <end position="24"/>
    </location>
</feature>
<feature type="helix" evidence="2">
    <location>
        <begin position="39"/>
        <end position="42"/>
    </location>
</feature>
<feature type="strand" evidence="2">
    <location>
        <begin position="47"/>
        <end position="53"/>
    </location>
</feature>
<feature type="strand" evidence="2">
    <location>
        <begin position="56"/>
        <end position="63"/>
    </location>
</feature>
<feature type="helix" evidence="2">
    <location>
        <begin position="70"/>
        <end position="83"/>
    </location>
</feature>
<feature type="helix" evidence="2">
    <location>
        <begin position="93"/>
        <end position="98"/>
    </location>
</feature>
<feature type="strand" evidence="2">
    <location>
        <begin position="100"/>
        <end position="106"/>
    </location>
</feature>
<feature type="turn" evidence="2">
    <location>
        <begin position="116"/>
        <end position="118"/>
    </location>
</feature>
<feature type="helix" evidence="2">
    <location>
        <begin position="119"/>
        <end position="122"/>
    </location>
</feature>
<feature type="turn" evidence="2">
    <location>
        <begin position="125"/>
        <end position="127"/>
    </location>
</feature>
<feature type="strand" evidence="2">
    <location>
        <begin position="129"/>
        <end position="134"/>
    </location>
</feature>
<feature type="strand" evidence="2">
    <location>
        <begin position="137"/>
        <end position="141"/>
    </location>
</feature>
<feature type="helix" evidence="2">
    <location>
        <begin position="145"/>
        <end position="148"/>
    </location>
</feature>
<feature type="helix" evidence="2">
    <location>
        <begin position="153"/>
        <end position="163"/>
    </location>
</feature>
<feature type="helix" evidence="2">
    <location>
        <begin position="168"/>
        <end position="171"/>
    </location>
</feature>
<feature type="turn" evidence="2">
    <location>
        <begin position="172"/>
        <end position="174"/>
    </location>
</feature>
<feature type="strand" evidence="2">
    <location>
        <begin position="176"/>
        <end position="180"/>
    </location>
</feature>
<feature type="strand" evidence="2">
    <location>
        <begin position="182"/>
        <end position="189"/>
    </location>
</feature>
<feature type="strand" evidence="2">
    <location>
        <begin position="194"/>
        <end position="197"/>
    </location>
</feature>
<gene>
    <name type="ordered locus">MM_0484</name>
</gene>
<accession>Q8PZK8</accession>
<reference key="1">
    <citation type="journal article" date="2002" name="J. Mol. Microbiol. Biotechnol.">
        <title>The genome of Methanosarcina mazei: evidence for lateral gene transfer between Bacteria and Archaea.</title>
        <authorList>
            <person name="Deppenmeier U."/>
            <person name="Johann A."/>
            <person name="Hartsch T."/>
            <person name="Merkl R."/>
            <person name="Schmitz R.A."/>
            <person name="Martinez-Arias R."/>
            <person name="Henne A."/>
            <person name="Wiezer A."/>
            <person name="Baeumer S."/>
            <person name="Jacobi C."/>
            <person name="Brueggemann H."/>
            <person name="Lienard T."/>
            <person name="Christmann A."/>
            <person name="Boemecke M."/>
            <person name="Steckel S."/>
            <person name="Bhattacharyya A."/>
            <person name="Lykidis A."/>
            <person name="Overbeek R."/>
            <person name="Klenk H.-P."/>
            <person name="Gunsalus R.P."/>
            <person name="Fritz H.-J."/>
            <person name="Gottschalk G."/>
        </authorList>
    </citation>
    <scope>NUCLEOTIDE SEQUENCE [LARGE SCALE GENOMIC DNA]</scope>
    <source>
        <strain>ATCC BAA-159 / DSM 3647 / Goe1 / Go1 / JCM 11833 / OCM 88</strain>
    </source>
</reference>
<evidence type="ECO:0000255" key="1">
    <source>
        <dbReference type="HAMAP-Rule" id="MF_00645"/>
    </source>
</evidence>
<evidence type="ECO:0007829" key="2">
    <source>
        <dbReference type="PDB" id="1ZQ7"/>
    </source>
</evidence>